<protein>
    <recommendedName>
        <fullName evidence="1">Inosine triphosphate pyrophosphatase</fullName>
        <shortName evidence="1">ITPase</shortName>
        <shortName evidence="1">Inosine triphosphatase</shortName>
        <ecNumber evidence="1">3.6.1.66</ecNumber>
    </recommendedName>
    <alternativeName>
        <fullName evidence="1">Non-canonical purine NTP pyrophosphatase</fullName>
    </alternativeName>
    <alternativeName>
        <fullName evidence="1">Non-standard purine NTP pyrophosphatase</fullName>
    </alternativeName>
    <alternativeName>
        <fullName evidence="1">Nucleoside-triphosphate diphosphatase</fullName>
    </alternativeName>
    <alternativeName>
        <fullName evidence="1">Nucleoside-triphosphate pyrophosphatase</fullName>
        <shortName evidence="1">NTPase</shortName>
    </alternativeName>
    <alternativeName>
        <fullName evidence="1">XTP/dITP diphosphatase</fullName>
    </alternativeName>
</protein>
<organism>
    <name type="scientific">Encephalitozoon cuniculi (strain GB-M1)</name>
    <name type="common">Microsporidian parasite</name>
    <dbReference type="NCBI Taxonomy" id="284813"/>
    <lineage>
        <taxon>Eukaryota</taxon>
        <taxon>Fungi</taxon>
        <taxon>Fungi incertae sedis</taxon>
        <taxon>Microsporidia</taxon>
        <taxon>Unikaryonidae</taxon>
        <taxon>Encephalitozoon</taxon>
    </lineage>
</organism>
<accession>Q8SS24</accession>
<keyword id="KW-0963">Cytoplasm</keyword>
<keyword id="KW-0378">Hydrolase</keyword>
<keyword id="KW-0460">Magnesium</keyword>
<keyword id="KW-0464">Manganese</keyword>
<keyword id="KW-0479">Metal-binding</keyword>
<keyword id="KW-0546">Nucleotide metabolism</keyword>
<keyword id="KW-0547">Nucleotide-binding</keyword>
<keyword id="KW-0539">Nucleus</keyword>
<keyword id="KW-1185">Reference proteome</keyword>
<reference key="1">
    <citation type="journal article" date="2001" name="Nature">
        <title>Genome sequence and gene compaction of the eukaryote parasite Encephalitozoon cuniculi.</title>
        <authorList>
            <person name="Katinka M.D."/>
            <person name="Duprat S."/>
            <person name="Cornillot E."/>
            <person name="Metenier G."/>
            <person name="Thomarat F."/>
            <person name="Prensier G."/>
            <person name="Barbe V."/>
            <person name="Peyretaillade E."/>
            <person name="Brottier P."/>
            <person name="Wincker P."/>
            <person name="Delbac F."/>
            <person name="El Alaoui H."/>
            <person name="Peyret P."/>
            <person name="Saurin W."/>
            <person name="Gouy M."/>
            <person name="Weissenbach J."/>
            <person name="Vivares C.P."/>
        </authorList>
    </citation>
    <scope>NUCLEOTIDE SEQUENCE [LARGE SCALE GENOMIC DNA]</scope>
    <source>
        <strain>GB-M1</strain>
    </source>
</reference>
<gene>
    <name type="ordered locus">ECU04_1180</name>
</gene>
<evidence type="ECO:0000255" key="1">
    <source>
        <dbReference type="HAMAP-Rule" id="MF_03148"/>
    </source>
</evidence>
<name>ITPA_ENCCU</name>
<sequence length="192" mass="21149">MGRIYFATTNLKKLKEIRSLFEADIVHMNIPMVEIQASLERIVDHKLNQVVPCIGEGDAVIVDDTAVAFEGLYGFPGVYIKDFLRIGSRKISEIVGKIGNSNATAFCCLGIAHYRDGRVVKKVFFGELEGSIVESKEDGLEGFDYIFLPSGSSMCLGDMPVDEKNRISHRRIASKKLADYMASVGIIKAHGS</sequence>
<proteinExistence type="inferred from homology"/>
<comment type="function">
    <text evidence="1">Pyrophosphatase that hydrolyzes non-canonical purine nucleotides such as inosine triphosphate (ITP), deoxyinosine triphosphate (dITP) or xanthosine 5'-triphosphate (XTP) to their respective monophosphate derivatives. The enzyme does not distinguish between the deoxy- and ribose forms. Probably excludes non-canonical purines from RNA and DNA precursor pools, thus preventing their incorporation into RNA and DNA and avoiding chromosomal lesions.</text>
</comment>
<comment type="catalytic activity">
    <reaction evidence="1">
        <text>ITP + H2O = IMP + diphosphate + H(+)</text>
        <dbReference type="Rhea" id="RHEA:29399"/>
        <dbReference type="ChEBI" id="CHEBI:15377"/>
        <dbReference type="ChEBI" id="CHEBI:15378"/>
        <dbReference type="ChEBI" id="CHEBI:33019"/>
        <dbReference type="ChEBI" id="CHEBI:58053"/>
        <dbReference type="ChEBI" id="CHEBI:61402"/>
        <dbReference type="EC" id="3.6.1.66"/>
    </reaction>
    <physiologicalReaction direction="left-to-right" evidence="1">
        <dbReference type="Rhea" id="RHEA:29400"/>
    </physiologicalReaction>
</comment>
<comment type="catalytic activity">
    <reaction evidence="1">
        <text>dITP + H2O = dIMP + diphosphate + H(+)</text>
        <dbReference type="Rhea" id="RHEA:28342"/>
        <dbReference type="ChEBI" id="CHEBI:15377"/>
        <dbReference type="ChEBI" id="CHEBI:15378"/>
        <dbReference type="ChEBI" id="CHEBI:33019"/>
        <dbReference type="ChEBI" id="CHEBI:61194"/>
        <dbReference type="ChEBI" id="CHEBI:61382"/>
        <dbReference type="EC" id="3.6.1.66"/>
    </reaction>
    <physiologicalReaction direction="left-to-right" evidence="1">
        <dbReference type="Rhea" id="RHEA:28343"/>
    </physiologicalReaction>
</comment>
<comment type="catalytic activity">
    <reaction evidence="1">
        <text>XTP + H2O = XMP + diphosphate + H(+)</text>
        <dbReference type="Rhea" id="RHEA:28610"/>
        <dbReference type="ChEBI" id="CHEBI:15377"/>
        <dbReference type="ChEBI" id="CHEBI:15378"/>
        <dbReference type="ChEBI" id="CHEBI:33019"/>
        <dbReference type="ChEBI" id="CHEBI:57464"/>
        <dbReference type="ChEBI" id="CHEBI:61314"/>
        <dbReference type="EC" id="3.6.1.66"/>
    </reaction>
    <physiologicalReaction direction="left-to-right" evidence="1">
        <dbReference type="Rhea" id="RHEA:28611"/>
    </physiologicalReaction>
</comment>
<comment type="cofactor">
    <cofactor evidence="1">
        <name>Mg(2+)</name>
        <dbReference type="ChEBI" id="CHEBI:18420"/>
    </cofactor>
    <cofactor evidence="1">
        <name>Mn(2+)</name>
        <dbReference type="ChEBI" id="CHEBI:29035"/>
    </cofactor>
    <text evidence="1">Binds 1 divalent metal cation per subunit; can use either Mg(2+) or Mn(2+).</text>
</comment>
<comment type="subunit">
    <text evidence="1">Homodimer.</text>
</comment>
<comment type="subcellular location">
    <subcellularLocation>
        <location evidence="1">Cytoplasm</location>
    </subcellularLocation>
    <subcellularLocation>
        <location evidence="1">Nucleus</location>
    </subcellularLocation>
</comment>
<comment type="similarity">
    <text evidence="1">Belongs to the HAM1 NTPase family.</text>
</comment>
<dbReference type="EC" id="3.6.1.66" evidence="1"/>
<dbReference type="EMBL" id="AL590444">
    <property type="protein sequence ID" value="CAD25306.1"/>
    <property type="molecule type" value="Genomic_DNA"/>
</dbReference>
<dbReference type="RefSeq" id="NP_584802.1">
    <property type="nucleotide sequence ID" value="NM_001041152.1"/>
</dbReference>
<dbReference type="SMR" id="Q8SS24"/>
<dbReference type="FunCoup" id="Q8SS24">
    <property type="interactions" value="213"/>
</dbReference>
<dbReference type="STRING" id="284813.Q8SS24"/>
<dbReference type="GeneID" id="858950"/>
<dbReference type="KEGG" id="ecu:ECU04_1180"/>
<dbReference type="VEuPathDB" id="MicrosporidiaDB:ECU04_1180"/>
<dbReference type="HOGENOM" id="CLU_082080_1_0_1"/>
<dbReference type="InParanoid" id="Q8SS24"/>
<dbReference type="OMA" id="QWDCVFI"/>
<dbReference type="OrthoDB" id="6288734at2759"/>
<dbReference type="Proteomes" id="UP000000819">
    <property type="component" value="Chromosome IV"/>
</dbReference>
<dbReference type="GO" id="GO:0005737">
    <property type="term" value="C:cytoplasm"/>
    <property type="evidence" value="ECO:0007669"/>
    <property type="project" value="UniProtKB-SubCell"/>
</dbReference>
<dbReference type="GO" id="GO:0005634">
    <property type="term" value="C:nucleus"/>
    <property type="evidence" value="ECO:0007669"/>
    <property type="project" value="UniProtKB-SubCell"/>
</dbReference>
<dbReference type="GO" id="GO:0035870">
    <property type="term" value="F:dITP diphosphatase activity"/>
    <property type="evidence" value="ECO:0007669"/>
    <property type="project" value="RHEA"/>
</dbReference>
<dbReference type="GO" id="GO:0036220">
    <property type="term" value="F:ITP diphosphatase activity"/>
    <property type="evidence" value="ECO:0007669"/>
    <property type="project" value="RHEA"/>
</dbReference>
<dbReference type="GO" id="GO:0046872">
    <property type="term" value="F:metal ion binding"/>
    <property type="evidence" value="ECO:0007669"/>
    <property type="project" value="UniProtKB-KW"/>
</dbReference>
<dbReference type="GO" id="GO:0000166">
    <property type="term" value="F:nucleotide binding"/>
    <property type="evidence" value="ECO:0007669"/>
    <property type="project" value="UniProtKB-KW"/>
</dbReference>
<dbReference type="GO" id="GO:0036222">
    <property type="term" value="F:XTP diphosphatase activity"/>
    <property type="evidence" value="ECO:0007669"/>
    <property type="project" value="RHEA"/>
</dbReference>
<dbReference type="GO" id="GO:0009204">
    <property type="term" value="P:deoxyribonucleoside triphosphate catabolic process"/>
    <property type="evidence" value="ECO:0007669"/>
    <property type="project" value="UniProtKB-UniRule"/>
</dbReference>
<dbReference type="GO" id="GO:0009117">
    <property type="term" value="P:nucleotide metabolic process"/>
    <property type="evidence" value="ECO:0007669"/>
    <property type="project" value="UniProtKB-KW"/>
</dbReference>
<dbReference type="CDD" id="cd00515">
    <property type="entry name" value="HAM1"/>
    <property type="match status" value="1"/>
</dbReference>
<dbReference type="Gene3D" id="3.90.950.10">
    <property type="match status" value="1"/>
</dbReference>
<dbReference type="HAMAP" id="MF_03148">
    <property type="entry name" value="HAM1_NTPase"/>
    <property type="match status" value="1"/>
</dbReference>
<dbReference type="InterPro" id="IPR027502">
    <property type="entry name" value="ITPase"/>
</dbReference>
<dbReference type="InterPro" id="IPR029001">
    <property type="entry name" value="ITPase-like_fam"/>
</dbReference>
<dbReference type="InterPro" id="IPR002637">
    <property type="entry name" value="RdgB/HAM1"/>
</dbReference>
<dbReference type="PANTHER" id="PTHR11067:SF9">
    <property type="entry name" value="INOSINE TRIPHOSPHATE PYROPHOSPHATASE"/>
    <property type="match status" value="1"/>
</dbReference>
<dbReference type="PANTHER" id="PTHR11067">
    <property type="entry name" value="INOSINE TRIPHOSPHATE PYROPHOSPHATASE/HAM1 PROTEIN"/>
    <property type="match status" value="1"/>
</dbReference>
<dbReference type="Pfam" id="PF01725">
    <property type="entry name" value="Ham1p_like"/>
    <property type="match status" value="1"/>
</dbReference>
<dbReference type="SUPFAM" id="SSF52972">
    <property type="entry name" value="ITPase-like"/>
    <property type="match status" value="1"/>
</dbReference>
<feature type="chain" id="PRO_0000413139" description="Inosine triphosphate pyrophosphatase">
    <location>
        <begin position="1"/>
        <end position="192"/>
    </location>
</feature>
<feature type="binding site" evidence="1">
    <location>
        <begin position="8"/>
        <end position="13"/>
    </location>
    <ligand>
        <name>ITP</name>
        <dbReference type="ChEBI" id="CHEBI:61402"/>
    </ligand>
</feature>
<feature type="binding site" evidence="1">
    <location>
        <position position="34"/>
    </location>
    <ligand>
        <name>Mg(2+)</name>
        <dbReference type="ChEBI" id="CHEBI:18420"/>
    </ligand>
</feature>
<feature type="binding site" evidence="1">
    <location>
        <position position="46"/>
    </location>
    <ligand>
        <name>ITP</name>
        <dbReference type="ChEBI" id="CHEBI:61402"/>
    </ligand>
</feature>
<feature type="binding site" evidence="1">
    <location>
        <begin position="64"/>
        <end position="65"/>
    </location>
    <ligand>
        <name>ITP</name>
        <dbReference type="ChEBI" id="CHEBI:61402"/>
    </ligand>
</feature>
<feature type="binding site" evidence="1">
    <location>
        <position position="81"/>
    </location>
    <ligand>
        <name>ITP</name>
        <dbReference type="ChEBI" id="CHEBI:61402"/>
    </ligand>
</feature>
<feature type="binding site" evidence="1">
    <location>
        <begin position="141"/>
        <end position="144"/>
    </location>
    <ligand>
        <name>ITP</name>
        <dbReference type="ChEBI" id="CHEBI:61402"/>
    </ligand>
</feature>
<feature type="binding site" evidence="1">
    <location>
        <position position="164"/>
    </location>
    <ligand>
        <name>ITP</name>
        <dbReference type="ChEBI" id="CHEBI:61402"/>
    </ligand>
</feature>
<feature type="binding site" evidence="1">
    <location>
        <begin position="169"/>
        <end position="170"/>
    </location>
    <ligand>
        <name>ITP</name>
        <dbReference type="ChEBI" id="CHEBI:61402"/>
    </ligand>
</feature>